<name>MCH_HALSA</name>
<organism>
    <name type="scientific">Halobacterium salinarum (strain ATCC 700922 / JCM 11081 / NRC-1)</name>
    <name type="common">Halobacterium halobium</name>
    <dbReference type="NCBI Taxonomy" id="64091"/>
    <lineage>
        <taxon>Archaea</taxon>
        <taxon>Methanobacteriati</taxon>
        <taxon>Methanobacteriota</taxon>
        <taxon>Stenosarchaea group</taxon>
        <taxon>Halobacteria</taxon>
        <taxon>Halobacteriales</taxon>
        <taxon>Halobacteriaceae</taxon>
        <taxon>Halobacterium</taxon>
        <taxon>Halobacterium salinarum NRC-34001</taxon>
    </lineage>
</organism>
<dbReference type="EC" id="3.5.4.27"/>
<dbReference type="EMBL" id="AE004437">
    <property type="protein sequence ID" value="AAG19933.1"/>
    <property type="molecule type" value="Genomic_DNA"/>
</dbReference>
<dbReference type="PIR" id="A84321">
    <property type="entry name" value="A84321"/>
</dbReference>
<dbReference type="RefSeq" id="WP_010903231.1">
    <property type="nucleotide sequence ID" value="NC_002607.1"/>
</dbReference>
<dbReference type="SMR" id="Q9HPD7"/>
<dbReference type="FunCoup" id="Q9HPD7">
    <property type="interactions" value="27"/>
</dbReference>
<dbReference type="STRING" id="64091.VNG_1686G"/>
<dbReference type="PaxDb" id="64091-VNG_1686G"/>
<dbReference type="GeneID" id="89349933"/>
<dbReference type="KEGG" id="hal:VNG_1686G"/>
<dbReference type="PATRIC" id="fig|64091.14.peg.1285"/>
<dbReference type="HOGENOM" id="CLU_876031_0_0_2"/>
<dbReference type="InParanoid" id="Q9HPD7"/>
<dbReference type="OrthoDB" id="105468at2157"/>
<dbReference type="PhylomeDB" id="Q9HPD7"/>
<dbReference type="Proteomes" id="UP000000554">
    <property type="component" value="Chromosome"/>
</dbReference>
<dbReference type="GO" id="GO:0005737">
    <property type="term" value="C:cytoplasm"/>
    <property type="evidence" value="ECO:0007669"/>
    <property type="project" value="UniProtKB-SubCell"/>
</dbReference>
<dbReference type="GO" id="GO:0018759">
    <property type="term" value="F:methenyltetrahydromethanopterin cyclohydrolase activity"/>
    <property type="evidence" value="ECO:0007669"/>
    <property type="project" value="UniProtKB-UniRule"/>
</dbReference>
<dbReference type="GO" id="GO:0006730">
    <property type="term" value="P:one-carbon metabolic process"/>
    <property type="evidence" value="ECO:0007669"/>
    <property type="project" value="UniProtKB-UniRule"/>
</dbReference>
<dbReference type="CDD" id="cd00545">
    <property type="entry name" value="MCH"/>
    <property type="match status" value="1"/>
</dbReference>
<dbReference type="Gene3D" id="3.10.340.11">
    <property type="entry name" value="Methenyltetrahydromethanopterin Cyclohydrolase, Chain A, domain 1"/>
    <property type="match status" value="1"/>
</dbReference>
<dbReference type="Gene3D" id="3.30.1030.10">
    <property type="entry name" value="Methenyltetrahydromethanopterin Cyclohydrolase, Chain A, domain 2"/>
    <property type="match status" value="1"/>
</dbReference>
<dbReference type="HAMAP" id="MF_00486">
    <property type="entry name" value="McH"/>
    <property type="match status" value="1"/>
</dbReference>
<dbReference type="InterPro" id="IPR003209">
    <property type="entry name" value="METHMP_CycHdrlase"/>
</dbReference>
<dbReference type="NCBIfam" id="TIGR03120">
    <property type="entry name" value="one_C_mch"/>
    <property type="match status" value="1"/>
</dbReference>
<dbReference type="Pfam" id="PF02289">
    <property type="entry name" value="MCH"/>
    <property type="match status" value="1"/>
</dbReference>
<dbReference type="SUPFAM" id="SSF56199">
    <property type="entry name" value="Methenyltetrahydromethanopterin cyclohydrolase"/>
    <property type="match status" value="1"/>
</dbReference>
<protein>
    <recommendedName>
        <fullName>Methenyltetrahydromethanopterin cyclohydrolase</fullName>
        <ecNumber>3.5.4.27</ecNumber>
    </recommendedName>
    <alternativeName>
        <fullName>Methenyl-H4MPT cyclohydrolase</fullName>
    </alternativeName>
</protein>
<evidence type="ECO:0000250" key="1"/>
<evidence type="ECO:0000305" key="2"/>
<feature type="chain" id="PRO_0000140878" description="Methenyltetrahydromethanopterin cyclohydrolase">
    <location>
        <begin position="1"/>
        <end position="311"/>
    </location>
</feature>
<accession>Q9HPD7</accession>
<comment type="function">
    <text evidence="1">Catalyzes the hydrolysis of methenyl-H(4)MPT(+) to 5-formyl-H(4)MPT.</text>
</comment>
<comment type="catalytic activity">
    <reaction>
        <text>5,10-methenyl-5,6,7,8-tetrahydromethanopterin + H2O = N(5)-formyl-5,6,7,8-tetrahydromethanopterin + H(+)</text>
        <dbReference type="Rhea" id="RHEA:19053"/>
        <dbReference type="ChEBI" id="CHEBI:15377"/>
        <dbReference type="ChEBI" id="CHEBI:15378"/>
        <dbReference type="ChEBI" id="CHEBI:58018"/>
        <dbReference type="ChEBI" id="CHEBI:58337"/>
        <dbReference type="EC" id="3.5.4.27"/>
    </reaction>
</comment>
<comment type="subcellular location">
    <subcellularLocation>
        <location evidence="1">Cytoplasm</location>
    </subcellularLocation>
</comment>
<comment type="similarity">
    <text evidence="2">Belongs to the MCH family.</text>
</comment>
<gene>
    <name type="primary">mch</name>
    <name type="ordered locus">VNG_1686G</name>
</gene>
<sequence>MESLNRMALELADEALEFTEELDIGAFELDTGTTVIDFGVEHDGGLEAGLLLAELQTAGLATVQTRVDTVGDATFPHVEVACDQPAVAMLGAQKAGWELAVDDYEALGSGPARALVATEGEFQAIDYVDAFEFAVLTLESTGLPTTAAASEVAARAGVTEESVFLPTYRTASVAGSVSAAARTVELAVFRLYELGYDPTDVLSASGCAPVAPVAGDEQTAIGRTNDALAHGGRVHLTVAEDFDAFDAVVSSAAARYDDPFAEVVGTDDWDAGDVDNGVFGPAQLTVDVVGGPTHAFGTVREDVLADGFGLS</sequence>
<proteinExistence type="inferred from homology"/>
<keyword id="KW-0963">Cytoplasm</keyword>
<keyword id="KW-0378">Hydrolase</keyword>
<keyword id="KW-0554">One-carbon metabolism</keyword>
<keyword id="KW-1185">Reference proteome</keyword>
<reference key="1">
    <citation type="journal article" date="2000" name="Proc. Natl. Acad. Sci. U.S.A.">
        <title>Genome sequence of Halobacterium species NRC-1.</title>
        <authorList>
            <person name="Ng W.V."/>
            <person name="Kennedy S.P."/>
            <person name="Mahairas G.G."/>
            <person name="Berquist B."/>
            <person name="Pan M."/>
            <person name="Shukla H.D."/>
            <person name="Lasky S.R."/>
            <person name="Baliga N.S."/>
            <person name="Thorsson V."/>
            <person name="Sbrogna J."/>
            <person name="Swartzell S."/>
            <person name="Weir D."/>
            <person name="Hall J."/>
            <person name="Dahl T.A."/>
            <person name="Welti R."/>
            <person name="Goo Y.A."/>
            <person name="Leithauser B."/>
            <person name="Keller K."/>
            <person name="Cruz R."/>
            <person name="Danson M.J."/>
            <person name="Hough D.W."/>
            <person name="Maddocks D.G."/>
            <person name="Jablonski P.E."/>
            <person name="Krebs M.P."/>
            <person name="Angevine C.M."/>
            <person name="Dale H."/>
            <person name="Isenbarger T.A."/>
            <person name="Peck R.F."/>
            <person name="Pohlschroder M."/>
            <person name="Spudich J.L."/>
            <person name="Jung K.-H."/>
            <person name="Alam M."/>
            <person name="Freitas T."/>
            <person name="Hou S."/>
            <person name="Daniels C.J."/>
            <person name="Dennis P.P."/>
            <person name="Omer A.D."/>
            <person name="Ebhardt H."/>
            <person name="Lowe T.M."/>
            <person name="Liang P."/>
            <person name="Riley M."/>
            <person name="Hood L."/>
            <person name="DasSarma S."/>
        </authorList>
    </citation>
    <scope>NUCLEOTIDE SEQUENCE [LARGE SCALE GENOMIC DNA]</scope>
    <source>
        <strain>ATCC 700922 / JCM 11081 / NRC-1</strain>
    </source>
</reference>